<accession>P80394</accession>
<accession>Q8MZN1</accession>
<evidence type="ECO:0000269" key="1">
    <source>
    </source>
</evidence>
<evidence type="ECO:0000305" key="2"/>
<reference key="1">
    <citation type="submission" date="2002-05" db="EMBL/GenBank/DDBJ databases">
        <authorList>
            <person name="Boldrin F."/>
            <person name="Santovito G."/>
            <person name="Irato P."/>
            <person name="Piccinni E."/>
        </authorList>
    </citation>
    <scope>NUCLEOTIDE SEQUENCE [GENOMIC DNA]</scope>
</reference>
<reference key="2">
    <citation type="journal article" date="1994" name="Eur. J. Biochem.">
        <title>Purification and primary structure of metallothioneins induced by cadmium in the protists Tetrahymena pigmentosa and Tetrahymena pyriformis.</title>
        <authorList>
            <person name="Piccinni E."/>
            <person name="Staudenmann W."/>
            <person name="Albergoni V."/>
            <person name="de Gabrieli R."/>
            <person name="James P."/>
        </authorList>
    </citation>
    <scope>PROTEIN SEQUENCE OF 3-107</scope>
    <scope>MASS SPECTROMETRY</scope>
</reference>
<dbReference type="EMBL" id="AF509328">
    <property type="protein sequence ID" value="AAM34287.1"/>
    <property type="molecule type" value="Genomic_DNA"/>
</dbReference>
<dbReference type="PIR" id="S50911">
    <property type="entry name" value="S50911"/>
</dbReference>
<dbReference type="GO" id="GO:0046870">
    <property type="term" value="F:cadmium ion binding"/>
    <property type="evidence" value="ECO:0007669"/>
    <property type="project" value="InterPro"/>
</dbReference>
<dbReference type="InterPro" id="IPR012484">
    <property type="entry name" value="Metalthion_7"/>
</dbReference>
<dbReference type="Pfam" id="PF07846">
    <property type="entry name" value="Metallothio_Cad"/>
    <property type="match status" value="2"/>
</dbReference>
<protein>
    <recommendedName>
        <fullName>Metallothionein-1</fullName>
        <shortName>MT-1</shortName>
    </recommendedName>
    <component>
        <recommendedName>
            <fullName>Metallothionein-2</fullName>
            <shortName>MT-2</shortName>
        </recommendedName>
    </component>
</protein>
<keyword id="KW-0104">Cadmium</keyword>
<keyword id="KW-0903">Direct protein sequencing</keyword>
<keyword id="KW-0479">Metal-binding</keyword>
<keyword id="KW-0480">Metal-thiolate cluster</keyword>
<name>MT1_TETPI</name>
<organism>
    <name type="scientific">Tetrahymena pigmentosa</name>
    <dbReference type="NCBI Taxonomy" id="5907"/>
    <lineage>
        <taxon>Eukaryota</taxon>
        <taxon>Sar</taxon>
        <taxon>Alveolata</taxon>
        <taxon>Ciliophora</taxon>
        <taxon>Intramacronucleata</taxon>
        <taxon>Oligohymenophorea</taxon>
        <taxon>Hymenostomatida</taxon>
        <taxon>Tetrahymenina</taxon>
        <taxon>Tetrahymenidae</taxon>
        <taxon>Tetrahymena</taxon>
    </lineage>
</organism>
<proteinExistence type="evidence at protein level"/>
<comment type="function">
    <text>The metallothioneins are involved in the cellular sequestration of toxic metal ions. Binds 12 cadmium ions per molecule.</text>
</comment>
<comment type="induction">
    <text>By cadmium.</text>
</comment>
<comment type="mass spectrometry">
    <molecule>Metallothionein-1</molecule>
</comment>
<comment type="mass spectrometry">
    <molecule>Metallothionein-2</molecule>
</comment>
<comment type="similarity">
    <text evidence="2">Belongs to the metallothionein superfamily. Type 7 family.</text>
</comment>
<sequence>MDKVNNNCCCGENAKPCCTDPNSGCCCVSETNNCCKSDKKECCTGTGEGCKCTGCKCCQPAKSGCCCGDKAKACCTDPNSGCCCSSKTNKCCDSTNKTECKTCECCK</sequence>
<feature type="propeptide" id="PRO_0000018667" evidence="1">
    <location>
        <begin position="1"/>
        <end position="2"/>
    </location>
</feature>
<feature type="chain" id="PRO_0000018668" description="Metallothionein-1">
    <location>
        <begin position="3"/>
        <end position="107"/>
    </location>
</feature>
<feature type="chain" id="PRO_0000018669" description="Metallothionein-2">
    <location>
        <begin position="4"/>
        <end position="107"/>
    </location>
</feature>